<accession>Q6F3F3</accession>
<dbReference type="EC" id="2.5.1.6" evidence="5"/>
<dbReference type="EMBL" id="AB183562">
    <property type="protein sequence ID" value="BAD29708.1"/>
    <property type="molecule type" value="mRNA"/>
</dbReference>
<dbReference type="SMR" id="Q6F3F3"/>
<dbReference type="BRENDA" id="2.5.1.6">
    <property type="organism ID" value="7740"/>
</dbReference>
<dbReference type="UniPathway" id="UPA00315">
    <property type="reaction ID" value="UER00080"/>
</dbReference>
<dbReference type="GO" id="GO:0005737">
    <property type="term" value="C:cytoplasm"/>
    <property type="evidence" value="ECO:0007669"/>
    <property type="project" value="UniProtKB-SubCell"/>
</dbReference>
<dbReference type="GO" id="GO:0005524">
    <property type="term" value="F:ATP binding"/>
    <property type="evidence" value="ECO:0007669"/>
    <property type="project" value="UniProtKB-KW"/>
</dbReference>
<dbReference type="GO" id="GO:0046872">
    <property type="term" value="F:metal ion binding"/>
    <property type="evidence" value="ECO:0007669"/>
    <property type="project" value="UniProtKB-KW"/>
</dbReference>
<dbReference type="GO" id="GO:0004478">
    <property type="term" value="F:methionine adenosyltransferase activity"/>
    <property type="evidence" value="ECO:0007669"/>
    <property type="project" value="UniProtKB-EC"/>
</dbReference>
<dbReference type="GO" id="GO:0006730">
    <property type="term" value="P:one-carbon metabolic process"/>
    <property type="evidence" value="ECO:0007669"/>
    <property type="project" value="UniProtKB-KW"/>
</dbReference>
<dbReference type="GO" id="GO:0006556">
    <property type="term" value="P:S-adenosylmethionine biosynthetic process"/>
    <property type="evidence" value="ECO:0007669"/>
    <property type="project" value="UniProtKB-UniPathway"/>
</dbReference>
<dbReference type="CDD" id="cd18079">
    <property type="entry name" value="S-AdoMet_synt"/>
    <property type="match status" value="1"/>
</dbReference>
<dbReference type="FunFam" id="3.30.300.10:FF:000001">
    <property type="entry name" value="S-adenosylmethionine synthase"/>
    <property type="match status" value="1"/>
</dbReference>
<dbReference type="FunFam" id="3.30.300.10:FF:000003">
    <property type="entry name" value="S-adenosylmethionine synthase"/>
    <property type="match status" value="1"/>
</dbReference>
<dbReference type="FunFam" id="3.30.300.10:FF:000004">
    <property type="entry name" value="S-adenosylmethionine synthase"/>
    <property type="match status" value="1"/>
</dbReference>
<dbReference type="Gene3D" id="3.30.300.10">
    <property type="match status" value="3"/>
</dbReference>
<dbReference type="HAMAP" id="MF_00086">
    <property type="entry name" value="S_AdoMet_synth1"/>
    <property type="match status" value="1"/>
</dbReference>
<dbReference type="InterPro" id="IPR022631">
    <property type="entry name" value="ADOMET_SYNTHASE_CS"/>
</dbReference>
<dbReference type="InterPro" id="IPR022630">
    <property type="entry name" value="S-AdoMet_synt_C"/>
</dbReference>
<dbReference type="InterPro" id="IPR022629">
    <property type="entry name" value="S-AdoMet_synt_central"/>
</dbReference>
<dbReference type="InterPro" id="IPR022628">
    <property type="entry name" value="S-AdoMet_synt_N"/>
</dbReference>
<dbReference type="InterPro" id="IPR002133">
    <property type="entry name" value="S-AdoMet_synthetase"/>
</dbReference>
<dbReference type="InterPro" id="IPR022636">
    <property type="entry name" value="S-AdoMet_synthetase_sfam"/>
</dbReference>
<dbReference type="NCBIfam" id="TIGR01034">
    <property type="entry name" value="metK"/>
    <property type="match status" value="1"/>
</dbReference>
<dbReference type="PANTHER" id="PTHR11964">
    <property type="entry name" value="S-ADENOSYLMETHIONINE SYNTHETASE"/>
    <property type="match status" value="1"/>
</dbReference>
<dbReference type="Pfam" id="PF02773">
    <property type="entry name" value="S-AdoMet_synt_C"/>
    <property type="match status" value="1"/>
</dbReference>
<dbReference type="Pfam" id="PF02772">
    <property type="entry name" value="S-AdoMet_synt_M"/>
    <property type="match status" value="1"/>
</dbReference>
<dbReference type="Pfam" id="PF00438">
    <property type="entry name" value="S-AdoMet_synt_N"/>
    <property type="match status" value="1"/>
</dbReference>
<dbReference type="PIRSF" id="PIRSF000497">
    <property type="entry name" value="MAT"/>
    <property type="match status" value="1"/>
</dbReference>
<dbReference type="SUPFAM" id="SSF55973">
    <property type="entry name" value="S-adenosylmethionine synthetase"/>
    <property type="match status" value="3"/>
</dbReference>
<dbReference type="PROSITE" id="PS00376">
    <property type="entry name" value="ADOMET_SYNTHASE_1"/>
    <property type="match status" value="1"/>
</dbReference>
<dbReference type="PROSITE" id="PS00377">
    <property type="entry name" value="ADOMET_SYNTHASE_2"/>
    <property type="match status" value="1"/>
</dbReference>
<gene>
    <name type="primary">SAMS2</name>
</gene>
<keyword id="KW-0067">ATP-binding</keyword>
<keyword id="KW-0170">Cobalt</keyword>
<keyword id="KW-0963">Cytoplasm</keyword>
<keyword id="KW-0460">Magnesium</keyword>
<keyword id="KW-0479">Metal-binding</keyword>
<keyword id="KW-0547">Nucleotide-binding</keyword>
<keyword id="KW-0554">One-carbon metabolism</keyword>
<keyword id="KW-0630">Potassium</keyword>
<keyword id="KW-0808">Transferase</keyword>
<protein>
    <recommendedName>
        <fullName>S-adenosylmethionine synthase 2</fullName>
        <shortName>AdoMet synthase 2</shortName>
        <ecNumber evidence="5">2.5.1.6</ecNumber>
    </recommendedName>
    <alternativeName>
        <fullName>Methionine adenosyltransferase 2</fullName>
        <shortName>MAT 2</shortName>
    </alternativeName>
</protein>
<evidence type="ECO:0000250" key="1"/>
<evidence type="ECO:0000250" key="2">
    <source>
        <dbReference type="UniProtKB" id="P0A817"/>
    </source>
</evidence>
<evidence type="ECO:0000250" key="3">
    <source>
        <dbReference type="UniProtKB" id="P13444"/>
    </source>
</evidence>
<evidence type="ECO:0000250" key="4">
    <source>
        <dbReference type="UniProtKB" id="Q00266"/>
    </source>
</evidence>
<evidence type="ECO:0000250" key="5">
    <source>
        <dbReference type="UniProtKB" id="Q96551"/>
    </source>
</evidence>
<evidence type="ECO:0000269" key="6">
    <source>
    </source>
</evidence>
<evidence type="ECO:0000305" key="7"/>
<evidence type="ECO:0000305" key="8">
    <source>
    </source>
</evidence>
<organism>
    <name type="scientific">Atriplex nummularia</name>
    <name type="common">Old man saltbush</name>
    <name type="synonym">Atriplex johnstonii</name>
    <dbReference type="NCBI Taxonomy" id="3553"/>
    <lineage>
        <taxon>Eukaryota</taxon>
        <taxon>Viridiplantae</taxon>
        <taxon>Streptophyta</taxon>
        <taxon>Embryophyta</taxon>
        <taxon>Tracheophyta</taxon>
        <taxon>Spermatophyta</taxon>
        <taxon>Magnoliopsida</taxon>
        <taxon>eudicotyledons</taxon>
        <taxon>Gunneridae</taxon>
        <taxon>Pentapetalae</taxon>
        <taxon>Caryophyllales</taxon>
        <taxon>Chenopodiaceae</taxon>
        <taxon>Chenopodioideae</taxon>
        <taxon>Atripliceae</taxon>
        <taxon>Atriplex</taxon>
    </lineage>
</organism>
<comment type="function">
    <text evidence="5 8">Catalyzes the formation of S-adenosylmethionine from methionine and ATP. The reaction comprises two steps that are both catalyzed by the same enzyme: formation of S-adenosylmethionine (AdoMet) and triphosphate, and subsequent hydrolysis of the triphosphate (By similarity). May be involved in the synthesis of betain in response to abiotic stress such as high salinity (PubMed:15695433).</text>
</comment>
<comment type="catalytic activity">
    <reaction evidence="5">
        <text>L-methionine + ATP + H2O = S-adenosyl-L-methionine + phosphate + diphosphate</text>
        <dbReference type="Rhea" id="RHEA:21080"/>
        <dbReference type="ChEBI" id="CHEBI:15377"/>
        <dbReference type="ChEBI" id="CHEBI:30616"/>
        <dbReference type="ChEBI" id="CHEBI:33019"/>
        <dbReference type="ChEBI" id="CHEBI:43474"/>
        <dbReference type="ChEBI" id="CHEBI:57844"/>
        <dbReference type="ChEBI" id="CHEBI:59789"/>
        <dbReference type="EC" id="2.5.1.6"/>
    </reaction>
</comment>
<comment type="cofactor">
    <cofactor evidence="5">
        <name>Mn(2+)</name>
        <dbReference type="ChEBI" id="CHEBI:29035"/>
    </cofactor>
    <cofactor evidence="5">
        <name>Mg(2+)</name>
        <dbReference type="ChEBI" id="CHEBI:18420"/>
    </cofactor>
    <cofactor evidence="5">
        <name>Co(2+)</name>
        <dbReference type="ChEBI" id="CHEBI:48828"/>
    </cofactor>
    <text evidence="3 5">Binds 2 divalent ions per subunit. The metal ions interact primarily with the substrate (By similarity). Can utilize magnesium, manganese or cobalt (in vitro) (By similarity).</text>
</comment>
<comment type="cofactor">
    <cofactor evidence="5">
        <name>K(+)</name>
        <dbReference type="ChEBI" id="CHEBI:29103"/>
    </cofactor>
    <text evidence="3">Binds 1 potassium ion per subunit. The potassium ion interacts primarily with the substrate (By similarity).</text>
</comment>
<comment type="pathway">
    <text evidence="5">Amino-acid biosynthesis; S-adenosyl-L-methionine biosynthesis; S-adenosyl-L-methionine from L-methionine: step 1/1.</text>
</comment>
<comment type="subunit">
    <text evidence="1">Homotetramer.</text>
</comment>
<comment type="subcellular location">
    <subcellularLocation>
        <location evidence="1">Cytoplasm</location>
    </subcellularLocation>
</comment>
<comment type="tissue specificity">
    <text evidence="6">Expressed in roots, stems and leaves (at protein level).</text>
</comment>
<comment type="induction">
    <text evidence="6">By salt stress, in stems and leaves (at protein level). Follow a circadian regulation with higher levels in the light.</text>
</comment>
<comment type="similarity">
    <text evidence="7">Belongs to the AdoMet synthase family.</text>
</comment>
<proteinExistence type="evidence at protein level"/>
<reference key="1">
    <citation type="journal article" date="2005" name="Plant Cell Physiol.">
        <title>Similar regulation patterns of choline monooxygenase, phosphoethanolamine N-methyltransferase and S-adenosyl-L-methionine synthetase in leaves of the halophyte Atriplex nummularia L.</title>
        <authorList>
            <person name="Tabuchi T."/>
            <person name="Kawaguchi Y."/>
            <person name="Azuma T."/>
            <person name="Nanmori T."/>
            <person name="Yasuda T."/>
        </authorList>
    </citation>
    <scope>NUCLEOTIDE SEQUENCE [MRNA]</scope>
    <scope>FUNCTION</scope>
    <scope>TISSUE SPECIFICITY</scope>
    <scope>INDUCTION</scope>
    <source>
        <tissue>Shoot</tissue>
    </source>
</reference>
<feature type="chain" id="PRO_0000363006" description="S-adenosylmethionine synthase 2">
    <location>
        <begin position="1"/>
        <end position="396"/>
    </location>
</feature>
<feature type="binding site" evidence="3">
    <location>
        <position position="13"/>
    </location>
    <ligand>
        <name>Mg(2+)</name>
        <dbReference type="ChEBI" id="CHEBI:18420"/>
    </ligand>
</feature>
<feature type="binding site" description="in other chain" evidence="4">
    <location>
        <position position="19"/>
    </location>
    <ligand>
        <name>ATP</name>
        <dbReference type="ChEBI" id="CHEBI:30616"/>
        <note>ligand shared between two neighboring subunits</note>
    </ligand>
</feature>
<feature type="binding site" evidence="2">
    <location>
        <position position="47"/>
    </location>
    <ligand>
        <name>K(+)</name>
        <dbReference type="ChEBI" id="CHEBI:29103"/>
    </ligand>
</feature>
<feature type="binding site" description="in other chain" evidence="2">
    <location>
        <position position="60"/>
    </location>
    <ligand>
        <name>L-methionine</name>
        <dbReference type="ChEBI" id="CHEBI:57844"/>
        <note>ligand shared between two neighboring subunits</note>
    </ligand>
</feature>
<feature type="binding site" description="in other chain" evidence="2">
    <location>
        <position position="103"/>
    </location>
    <ligand>
        <name>L-methionine</name>
        <dbReference type="ChEBI" id="CHEBI:57844"/>
        <note>ligand shared between two neighboring subunits</note>
    </ligand>
</feature>
<feature type="binding site" description="in other chain" evidence="4">
    <location>
        <begin position="171"/>
        <end position="173"/>
    </location>
    <ligand>
        <name>ATP</name>
        <dbReference type="ChEBI" id="CHEBI:30616"/>
        <note>ligand shared between two neighboring subunits</note>
    </ligand>
</feature>
<feature type="binding site" description="in other chain" evidence="4">
    <location>
        <begin position="239"/>
        <end position="242"/>
    </location>
    <ligand>
        <name>ATP</name>
        <dbReference type="ChEBI" id="CHEBI:30616"/>
        <note>ligand shared between two neighboring subunits</note>
    </ligand>
</feature>
<feature type="binding site" description="in other chain" evidence="4">
    <location>
        <position position="250"/>
    </location>
    <ligand>
        <name>ATP</name>
        <dbReference type="ChEBI" id="CHEBI:30616"/>
        <note>ligand shared between two neighboring subunits</note>
    </ligand>
</feature>
<feature type="binding site" evidence="2">
    <location>
        <position position="250"/>
    </location>
    <ligand>
        <name>L-methionine</name>
        <dbReference type="ChEBI" id="CHEBI:57844"/>
        <note>ligand shared between two neighboring subunits</note>
    </ligand>
</feature>
<feature type="binding site" description="in other chain" evidence="2">
    <location>
        <begin position="256"/>
        <end position="257"/>
    </location>
    <ligand>
        <name>ATP</name>
        <dbReference type="ChEBI" id="CHEBI:30616"/>
        <note>ligand shared between two neighboring subunits</note>
    </ligand>
</feature>
<feature type="binding site" evidence="2">
    <location>
        <position position="273"/>
    </location>
    <ligand>
        <name>ATP</name>
        <dbReference type="ChEBI" id="CHEBI:30616"/>
        <note>ligand shared between two neighboring subunits</note>
    </ligand>
</feature>
<feature type="binding site" evidence="2">
    <location>
        <position position="277"/>
    </location>
    <ligand>
        <name>ATP</name>
        <dbReference type="ChEBI" id="CHEBI:30616"/>
        <note>ligand shared between two neighboring subunits</note>
    </ligand>
</feature>
<feature type="binding site" evidence="3">
    <location>
        <position position="281"/>
    </location>
    <ligand>
        <name>ATP</name>
        <dbReference type="ChEBI" id="CHEBI:30616"/>
        <note>ligand shared between two neighboring subunits</note>
    </ligand>
</feature>
<feature type="binding site" description="in other chain" evidence="2">
    <location>
        <position position="281"/>
    </location>
    <ligand>
        <name>L-methionine</name>
        <dbReference type="ChEBI" id="CHEBI:57844"/>
        <note>ligand shared between two neighboring subunits</note>
    </ligand>
</feature>
<sequence length="396" mass="43175">MAAAVDTFLFTSESVNEGHPDKLCDQISDAVLDACLAQDPESKVACETCTKTNLVMVFGEITTKADVDYEKIVRQTCRDIGFVSADVGLDADNCKVLVYIEQQSPDIAQGVHGHLSRRPEEIGAGDQGHMFGYASDETPELMPLSHVLATKLGARLTEVRKNGTCPWLRPDGKTQVTVEYYNENGAMVPIRVHTVLISTQHDETVTNDEIAADLKEHVIKPVIPEKYLDEKTIFHLNPSGRFVIGGPHGDAGLTGRKIIIDTYGGWGAHGGGAFSGKDPTKVDRSGAYIARQAAKSIVAAGLARRCIVQISYAIGVPEPLSVFVDTYGTGKIPDKEILKIVKETFDFRPGMIAINLDLLKGGSRYLKTAAYGHFGRDDADFTWETVKPLKWEKPQA</sequence>
<name>METK2_ATRNU</name>